<proteinExistence type="inferred from homology"/>
<gene>
    <name evidence="1" type="primary">khpA</name>
</gene>
<dbReference type="EMBL" id="Z86111">
    <property type="protein sequence ID" value="CAB06805.1"/>
    <property type="molecule type" value="Genomic_DNA"/>
</dbReference>
<dbReference type="SMR" id="P0A4Q5"/>
<dbReference type="GO" id="GO:0005737">
    <property type="term" value="C:cytoplasm"/>
    <property type="evidence" value="ECO:0007669"/>
    <property type="project" value="UniProtKB-SubCell"/>
</dbReference>
<dbReference type="GO" id="GO:0003723">
    <property type="term" value="F:RNA binding"/>
    <property type="evidence" value="ECO:0007669"/>
    <property type="project" value="UniProtKB-UniRule"/>
</dbReference>
<dbReference type="CDD" id="cd22533">
    <property type="entry name" value="KH-II_YlqC-like"/>
    <property type="match status" value="1"/>
</dbReference>
<dbReference type="Gene3D" id="3.30.300.20">
    <property type="match status" value="1"/>
</dbReference>
<dbReference type="HAMAP" id="MF_00088">
    <property type="entry name" value="KhpA"/>
    <property type="match status" value="1"/>
</dbReference>
<dbReference type="InterPro" id="IPR015946">
    <property type="entry name" value="KH_dom-like_a/b"/>
</dbReference>
<dbReference type="InterPro" id="IPR009019">
    <property type="entry name" value="KH_sf_prok-type"/>
</dbReference>
<dbReference type="InterPro" id="IPR020627">
    <property type="entry name" value="KhpA"/>
</dbReference>
<dbReference type="NCBIfam" id="NF002761">
    <property type="entry name" value="PRK02821.1"/>
    <property type="match status" value="1"/>
</dbReference>
<dbReference type="PANTHER" id="PTHR34654:SF1">
    <property type="entry name" value="RNA-BINDING PROTEIN KHPA"/>
    <property type="match status" value="1"/>
</dbReference>
<dbReference type="PANTHER" id="PTHR34654">
    <property type="entry name" value="UPF0109 PROTEIN SCO5592"/>
    <property type="match status" value="1"/>
</dbReference>
<dbReference type="Pfam" id="PF13083">
    <property type="entry name" value="KH_KhpA-B"/>
    <property type="match status" value="1"/>
</dbReference>
<dbReference type="SUPFAM" id="SSF54814">
    <property type="entry name" value="Prokaryotic type KH domain (KH-domain type II)"/>
    <property type="match status" value="1"/>
</dbReference>
<dbReference type="PROSITE" id="PS50084">
    <property type="entry name" value="KH_TYPE_1"/>
    <property type="match status" value="1"/>
</dbReference>
<feature type="chain" id="PRO_0000163235" description="RNA-binding protein KhpA">
    <location>
        <begin position="1"/>
        <end position="79"/>
    </location>
</feature>
<feature type="domain" description="KH" evidence="1">
    <location>
        <begin position="30"/>
        <end position="79"/>
    </location>
</feature>
<protein>
    <recommendedName>
        <fullName evidence="1">RNA-binding protein KhpA</fullName>
    </recommendedName>
    <alternativeName>
        <fullName evidence="1">KH-domain protein A</fullName>
    </alternativeName>
</protein>
<reference key="1">
    <citation type="submission" date="1997-02" db="EMBL/GenBank/DDBJ databases">
        <authorList>
            <person name="Parro V."/>
            <person name="Mellado R.P."/>
        </authorList>
    </citation>
    <scope>NUCLEOTIDE SEQUENCE [GENOMIC DNA]</scope>
    <source>
        <strain>TK21</strain>
    </source>
</reference>
<evidence type="ECO:0000255" key="1">
    <source>
        <dbReference type="HAMAP-Rule" id="MF_00088"/>
    </source>
</evidence>
<sequence>MLEEALEHLVKGIVDNPDDVQVASRNLRRGRVLEVRVHPDDLGKVIGRNGRTARALRTVVGAIGGRGVRVDLVDVDHVR</sequence>
<name>KHPA_STRLI</name>
<keyword id="KW-0963">Cytoplasm</keyword>
<keyword id="KW-0694">RNA-binding</keyword>
<accession>P0A4Q5</accession>
<accession>O69880</accession>
<organism>
    <name type="scientific">Streptomyces lividans</name>
    <dbReference type="NCBI Taxonomy" id="1916"/>
    <lineage>
        <taxon>Bacteria</taxon>
        <taxon>Bacillati</taxon>
        <taxon>Actinomycetota</taxon>
        <taxon>Actinomycetes</taxon>
        <taxon>Kitasatosporales</taxon>
        <taxon>Streptomycetaceae</taxon>
        <taxon>Streptomyces</taxon>
    </lineage>
</organism>
<comment type="function">
    <text evidence="1">A probable RNA-binding protein.</text>
</comment>
<comment type="subcellular location">
    <subcellularLocation>
        <location evidence="1">Cytoplasm</location>
    </subcellularLocation>
</comment>
<comment type="similarity">
    <text evidence="1">Belongs to the KhpA RNA-binding protein family.</text>
</comment>